<reference key="1">
    <citation type="journal article" date="1992" name="Mol. Gen. Genet.">
        <title>Accumulation of chloroplast psbB RNA requires a nuclear factor in Chlamydomonas reinhardtii.</title>
        <authorList>
            <person name="Monod C."/>
            <person name="Goldschmidt-Clermont M."/>
            <person name="Rochaix J.-D."/>
        </authorList>
    </citation>
    <scope>NUCLEOTIDE SEQUENCE [GENOMIC DNA]</scope>
</reference>
<reference key="2">
    <citation type="journal article" date="2009" name="BMC Evol. Biol.">
        <title>Nucleotide diversity of the Chlamydomonas reinhardtii plastid genome: addressing the mutational-hazard hypothesis.</title>
        <authorList>
            <person name="Smith D.R."/>
            <person name="Lee R.W."/>
        </authorList>
    </citation>
    <scope>NUCLEOTIDE SEQUENCE [LARGE SCALE GENOMIC DNA]</scope>
    <source>
        <strain>CC-503</strain>
    </source>
</reference>
<reference key="3">
    <citation type="journal article" date="2002" name="Plant Cell">
        <title>The Chlamydomonas reinhardtii plastid chromosome: islands of genes in a sea of repeats.</title>
        <authorList>
            <person name="Maul J.E."/>
            <person name="Lilly J.W."/>
            <person name="Cui L."/>
            <person name="dePamphilis C.W."/>
            <person name="Miller W."/>
            <person name="Harris E.H."/>
            <person name="Stern D.B."/>
        </authorList>
    </citation>
    <scope>IDENTIFICATION</scope>
    <scope>COMPLETE PLASTID GENOME</scope>
</reference>
<reference key="4">
    <citation type="journal article" date="1994" name="EMBO J.">
        <title>The chloroplast ycf8 open reading frame encodes a photosystem II polypeptide which maintains photosynthetic activity under adverse growth conditions.</title>
        <authorList>
            <person name="Monod C."/>
            <person name="Takahashi Y."/>
            <person name="Goldschmidt-Clermont M."/>
            <person name="Rochaix J.-D."/>
        </authorList>
    </citation>
    <scope>CHARACTERIZATION</scope>
</reference>
<keyword id="KW-0002">3D-structure</keyword>
<keyword id="KW-0150">Chloroplast</keyword>
<keyword id="KW-0472">Membrane</keyword>
<keyword id="KW-0602">Photosynthesis</keyword>
<keyword id="KW-0604">Photosystem II</keyword>
<keyword id="KW-0934">Plastid</keyword>
<keyword id="KW-1185">Reference proteome</keyword>
<keyword id="KW-0793">Thylakoid</keyword>
<keyword id="KW-0812">Transmembrane</keyword>
<keyword id="KW-1133">Transmembrane helix</keyword>
<organism>
    <name type="scientific">Chlamydomonas reinhardtii</name>
    <name type="common">Chlamydomonas smithii</name>
    <dbReference type="NCBI Taxonomy" id="3055"/>
    <lineage>
        <taxon>Eukaryota</taxon>
        <taxon>Viridiplantae</taxon>
        <taxon>Chlorophyta</taxon>
        <taxon>core chlorophytes</taxon>
        <taxon>Chlorophyceae</taxon>
        <taxon>CS clade</taxon>
        <taxon>Chlamydomonadales</taxon>
        <taxon>Chlamydomonadaceae</taxon>
        <taxon>Chlamydomonas</taxon>
    </lineage>
</organism>
<dbReference type="EMBL" id="X64066">
    <property type="protein sequence ID" value="CAA45422.1"/>
    <property type="molecule type" value="Genomic_DNA"/>
</dbReference>
<dbReference type="EMBL" id="FJ423446">
    <property type="protein sequence ID" value="ACJ50120.1"/>
    <property type="molecule type" value="Genomic_DNA"/>
</dbReference>
<dbReference type="EMBL" id="BK000554">
    <property type="protein sequence ID" value="DAA00932.1"/>
    <property type="molecule type" value="Genomic_DNA"/>
</dbReference>
<dbReference type="PIR" id="S20491">
    <property type="entry name" value="S20491"/>
</dbReference>
<dbReference type="RefSeq" id="NP_958387.1">
    <property type="nucleotide sequence ID" value="NC_005353.1"/>
</dbReference>
<dbReference type="PDB" id="6KAC">
    <property type="method" value="EM"/>
    <property type="resolution" value="2.70 A"/>
    <property type="chains" value="T/t=1-31"/>
</dbReference>
<dbReference type="PDB" id="6KAD">
    <property type="method" value="EM"/>
    <property type="resolution" value="3.40 A"/>
    <property type="chains" value="T/t=1-31"/>
</dbReference>
<dbReference type="PDB" id="6KAF">
    <property type="method" value="EM"/>
    <property type="resolution" value="3.73 A"/>
    <property type="chains" value="T/t=1-31"/>
</dbReference>
<dbReference type="PDB" id="8KDE">
    <property type="method" value="EM"/>
    <property type="resolution" value="2.60 A"/>
    <property type="chains" value="T=1-31"/>
</dbReference>
<dbReference type="PDB" id="8ZEE">
    <property type="method" value="EM"/>
    <property type="resolution" value="2.90 A"/>
    <property type="chains" value="T=1-31"/>
</dbReference>
<dbReference type="PDBsum" id="6KAC"/>
<dbReference type="PDBsum" id="6KAD"/>
<dbReference type="PDBsum" id="6KAF"/>
<dbReference type="PDBsum" id="8KDE"/>
<dbReference type="PDBsum" id="8ZEE"/>
<dbReference type="EMDB" id="EMD-37133"/>
<dbReference type="EMDB" id="EMD-60026"/>
<dbReference type="EMDB" id="EMD-9955"/>
<dbReference type="EMDB" id="EMD-9956"/>
<dbReference type="EMDB" id="EMD-9957"/>
<dbReference type="SMR" id="P37256"/>
<dbReference type="FunCoup" id="P37256">
    <property type="interactions" value="34"/>
</dbReference>
<dbReference type="STRING" id="3055.P37256"/>
<dbReference type="PaxDb" id="3055-DAA00932"/>
<dbReference type="GeneID" id="2717032"/>
<dbReference type="KEGG" id="cre:ChreCp031"/>
<dbReference type="eggNOG" id="ENOG502SCPW">
    <property type="taxonomic scope" value="Eukaryota"/>
</dbReference>
<dbReference type="HOGENOM" id="CLU_217078_0_0_1"/>
<dbReference type="InParanoid" id="P37256"/>
<dbReference type="BioCyc" id="CHLAMY:CHRECP031-MONOMER"/>
<dbReference type="BioCyc" id="MetaCyc:CHRECP031-MONOMER"/>
<dbReference type="Proteomes" id="UP000006906">
    <property type="component" value="Chloroplast"/>
</dbReference>
<dbReference type="GO" id="GO:0009535">
    <property type="term" value="C:chloroplast thylakoid membrane"/>
    <property type="evidence" value="ECO:0007669"/>
    <property type="project" value="UniProtKB-SubCell"/>
</dbReference>
<dbReference type="GO" id="GO:0009539">
    <property type="term" value="C:photosystem II reaction center"/>
    <property type="evidence" value="ECO:0007669"/>
    <property type="project" value="InterPro"/>
</dbReference>
<dbReference type="GO" id="GO:0015979">
    <property type="term" value="P:photosynthesis"/>
    <property type="evidence" value="ECO:0007669"/>
    <property type="project" value="UniProtKB-UniRule"/>
</dbReference>
<dbReference type="HAMAP" id="MF_00808">
    <property type="entry name" value="PSII_PsbT"/>
    <property type="match status" value="1"/>
</dbReference>
<dbReference type="InterPro" id="IPR001743">
    <property type="entry name" value="PSII_PsbT"/>
</dbReference>
<dbReference type="InterPro" id="IPR037268">
    <property type="entry name" value="PSII_PsbT_sf"/>
</dbReference>
<dbReference type="PANTHER" id="PTHR36411">
    <property type="match status" value="1"/>
</dbReference>
<dbReference type="PANTHER" id="PTHR36411:SF2">
    <property type="entry name" value="PHOTOSYSTEM II REACTION CENTER PROTEIN T"/>
    <property type="match status" value="1"/>
</dbReference>
<dbReference type="Pfam" id="PF01405">
    <property type="entry name" value="PsbT"/>
    <property type="match status" value="1"/>
</dbReference>
<dbReference type="SUPFAM" id="SSF161029">
    <property type="entry name" value="Photosystem II reaction center protein T, PsbT"/>
    <property type="match status" value="1"/>
</dbReference>
<accession>P37256</accession>
<accession>B7U1H3</accession>
<protein>
    <recommendedName>
        <fullName evidence="1">Photosystem II reaction center protein T</fullName>
        <shortName evidence="1">PSII-T</shortName>
    </recommendedName>
</protein>
<evidence type="ECO:0000255" key="1">
    <source>
        <dbReference type="HAMAP-Rule" id="MF_00808"/>
    </source>
</evidence>
<evidence type="ECO:0000305" key="2"/>
<evidence type="ECO:0007829" key="3">
    <source>
        <dbReference type="PDB" id="8KDE"/>
    </source>
</evidence>
<geneLocation type="chloroplast"/>
<name>PSBT_CHLRE</name>
<comment type="function">
    <text evidence="1">Found at the monomer-monomer interface of the photosystem II (PS II) dimer, plays a role in assembly and dimerization of PSII. PSII is a light-driven water plastoquinone oxidoreductase, using light energy to abstract electrons from H(2)O, generating a proton gradient subsequently used for ATP formation.</text>
</comment>
<comment type="subunit">
    <text evidence="1">PSII is composed of 1 copy each of membrane proteins PsbA, PsbB, PsbC, PsbD, PsbE, PsbF, PsbH, PsbI, PsbJ, PsbK, PsbL, PsbM, PsbT, PsbY, PsbZ, Psb30/Ycf12, at least 3 peripheral proteins of the oxygen-evolving complex and a large number of cofactors. It forms dimeric complexes.</text>
</comment>
<comment type="subcellular location">
    <subcellularLocation>
        <location evidence="1">Plastid</location>
        <location evidence="1">Chloroplast thylakoid membrane</location>
        <topology evidence="1">Single-pass membrane protein</topology>
    </subcellularLocation>
</comment>
<comment type="similarity">
    <text evidence="1 2">Belongs to the PsbT family.</text>
</comment>
<feature type="chain" id="PRO_0000217917" description="Photosystem II reaction center protein T">
    <location>
        <begin position="1"/>
        <end position="31"/>
    </location>
</feature>
<feature type="transmembrane region" description="Helical" evidence="1">
    <location>
        <begin position="3"/>
        <end position="23"/>
    </location>
</feature>
<feature type="helix" evidence="3">
    <location>
        <begin position="2"/>
        <end position="22"/>
    </location>
</feature>
<gene>
    <name evidence="1" type="primary">psbT</name>
    <name type="synonym">ycf8</name>
</gene>
<sequence>MEALVYTFLLVGTLGIIFFSIFFRDPPRMIK</sequence>
<proteinExistence type="evidence at protein level"/>